<gene>
    <name evidence="5" type="primary">GLYATL1</name>
    <name type="synonym">GNAT</name>
</gene>
<comment type="function">
    <text evidence="1">Acyltransferase which transfers an acyl group to the N-terminus of glutamine. Can use phenylacetyl-CoA as an acyl donor.</text>
</comment>
<comment type="catalytic activity">
    <reaction evidence="1">
        <text>an acyl-CoA + L-glutamine = an N(2)-acyl-L-glutamine + CoA + H(+)</text>
        <dbReference type="Rhea" id="RHEA:18469"/>
        <dbReference type="ChEBI" id="CHEBI:15378"/>
        <dbReference type="ChEBI" id="CHEBI:57287"/>
        <dbReference type="ChEBI" id="CHEBI:58342"/>
        <dbReference type="ChEBI" id="CHEBI:58359"/>
        <dbReference type="ChEBI" id="CHEBI:87584"/>
        <dbReference type="EC" id="2.3.1.68"/>
    </reaction>
</comment>
<comment type="alternative products">
    <event type="alternative splicing"/>
    <isoform>
        <id>Q969I3-1</id>
        <name>1</name>
        <sequence type="displayed"/>
    </isoform>
    <isoform>
        <id>Q969I3-2</id>
        <name>2</name>
        <sequence type="described" ref="VSP_024076"/>
    </isoform>
</comment>
<comment type="tissue specificity">
    <text evidence="2">Expressed in liver and kidney and, at lower levels, in pancreas, testis, ovary and stomach.</text>
</comment>
<comment type="similarity">
    <text evidence="4">Belongs to the glycine N-acyltransferase family.</text>
</comment>
<reference key="1">
    <citation type="journal article" date="2008" name="Int. J. Mol. Sci.">
        <title>Molecular cloning and characterization of a novel human glycine-n-acyltransferase gene GLYATL1, which activates transcriptional activity of HSE pathway.</title>
        <authorList>
            <person name="Zhang H."/>
            <person name="Qu Y."/>
            <person name="Lang Q."/>
            <person name="Li J."/>
            <person name="Zhong Z."/>
            <person name="Xie F."/>
            <person name="Ye G."/>
            <person name="Wan B."/>
            <person name="Yu L."/>
        </authorList>
    </citation>
    <scope>NUCLEOTIDE SEQUENCE [MRNA] (ISOFORM 1)</scope>
    <scope>TISSUE SPECIFICITY</scope>
    <source>
        <tissue>Liver</tissue>
    </source>
</reference>
<reference key="2">
    <citation type="journal article" date="2004" name="Nat. Genet.">
        <title>Complete sequencing and characterization of 21,243 full-length human cDNAs.</title>
        <authorList>
            <person name="Ota T."/>
            <person name="Suzuki Y."/>
            <person name="Nishikawa T."/>
            <person name="Otsuki T."/>
            <person name="Sugiyama T."/>
            <person name="Irie R."/>
            <person name="Wakamatsu A."/>
            <person name="Hayashi K."/>
            <person name="Sato H."/>
            <person name="Nagai K."/>
            <person name="Kimura K."/>
            <person name="Makita H."/>
            <person name="Sekine M."/>
            <person name="Obayashi M."/>
            <person name="Nishi T."/>
            <person name="Shibahara T."/>
            <person name="Tanaka T."/>
            <person name="Ishii S."/>
            <person name="Yamamoto J."/>
            <person name="Saito K."/>
            <person name="Kawai Y."/>
            <person name="Isono Y."/>
            <person name="Nakamura Y."/>
            <person name="Nagahari K."/>
            <person name="Murakami K."/>
            <person name="Yasuda T."/>
            <person name="Iwayanagi T."/>
            <person name="Wagatsuma M."/>
            <person name="Shiratori A."/>
            <person name="Sudo H."/>
            <person name="Hosoiri T."/>
            <person name="Kaku Y."/>
            <person name="Kodaira H."/>
            <person name="Kondo H."/>
            <person name="Sugawara M."/>
            <person name="Takahashi M."/>
            <person name="Kanda K."/>
            <person name="Yokoi T."/>
            <person name="Furuya T."/>
            <person name="Kikkawa E."/>
            <person name="Omura Y."/>
            <person name="Abe K."/>
            <person name="Kamihara K."/>
            <person name="Katsuta N."/>
            <person name="Sato K."/>
            <person name="Tanikawa M."/>
            <person name="Yamazaki M."/>
            <person name="Ninomiya K."/>
            <person name="Ishibashi T."/>
            <person name="Yamashita H."/>
            <person name="Murakawa K."/>
            <person name="Fujimori K."/>
            <person name="Tanai H."/>
            <person name="Kimata M."/>
            <person name="Watanabe M."/>
            <person name="Hiraoka S."/>
            <person name="Chiba Y."/>
            <person name="Ishida S."/>
            <person name="Ono Y."/>
            <person name="Takiguchi S."/>
            <person name="Watanabe S."/>
            <person name="Yosida M."/>
            <person name="Hotuta T."/>
            <person name="Kusano J."/>
            <person name="Kanehori K."/>
            <person name="Takahashi-Fujii A."/>
            <person name="Hara H."/>
            <person name="Tanase T.-O."/>
            <person name="Nomura Y."/>
            <person name="Togiya S."/>
            <person name="Komai F."/>
            <person name="Hara R."/>
            <person name="Takeuchi K."/>
            <person name="Arita M."/>
            <person name="Imose N."/>
            <person name="Musashino K."/>
            <person name="Yuuki H."/>
            <person name="Oshima A."/>
            <person name="Sasaki N."/>
            <person name="Aotsuka S."/>
            <person name="Yoshikawa Y."/>
            <person name="Matsunawa H."/>
            <person name="Ichihara T."/>
            <person name="Shiohata N."/>
            <person name="Sano S."/>
            <person name="Moriya S."/>
            <person name="Momiyama H."/>
            <person name="Satoh N."/>
            <person name="Takami S."/>
            <person name="Terashima Y."/>
            <person name="Suzuki O."/>
            <person name="Nakagawa S."/>
            <person name="Senoh A."/>
            <person name="Mizoguchi H."/>
            <person name="Goto Y."/>
            <person name="Shimizu F."/>
            <person name="Wakebe H."/>
            <person name="Hishigaki H."/>
            <person name="Watanabe T."/>
            <person name="Sugiyama A."/>
            <person name="Takemoto M."/>
            <person name="Kawakami B."/>
            <person name="Yamazaki M."/>
            <person name="Watanabe K."/>
            <person name="Kumagai A."/>
            <person name="Itakura S."/>
            <person name="Fukuzumi Y."/>
            <person name="Fujimori Y."/>
            <person name="Komiyama M."/>
            <person name="Tashiro H."/>
            <person name="Tanigami A."/>
            <person name="Fujiwara T."/>
            <person name="Ono T."/>
            <person name="Yamada K."/>
            <person name="Fujii Y."/>
            <person name="Ozaki K."/>
            <person name="Hirao M."/>
            <person name="Ohmori Y."/>
            <person name="Kawabata A."/>
            <person name="Hikiji T."/>
            <person name="Kobatake N."/>
            <person name="Inagaki H."/>
            <person name="Ikema Y."/>
            <person name="Okamoto S."/>
            <person name="Okitani R."/>
            <person name="Kawakami T."/>
            <person name="Noguchi S."/>
            <person name="Itoh T."/>
            <person name="Shigeta K."/>
            <person name="Senba T."/>
            <person name="Matsumura K."/>
            <person name="Nakajima Y."/>
            <person name="Mizuno T."/>
            <person name="Morinaga M."/>
            <person name="Sasaki M."/>
            <person name="Togashi T."/>
            <person name="Oyama M."/>
            <person name="Hata H."/>
            <person name="Watanabe M."/>
            <person name="Komatsu T."/>
            <person name="Mizushima-Sugano J."/>
            <person name="Satoh T."/>
            <person name="Shirai Y."/>
            <person name="Takahashi Y."/>
            <person name="Nakagawa K."/>
            <person name="Okumura K."/>
            <person name="Nagase T."/>
            <person name="Nomura N."/>
            <person name="Kikuchi H."/>
            <person name="Masuho Y."/>
            <person name="Yamashita R."/>
            <person name="Nakai K."/>
            <person name="Yada T."/>
            <person name="Nakamura Y."/>
            <person name="Ohara O."/>
            <person name="Isogai T."/>
            <person name="Sugano S."/>
        </authorList>
    </citation>
    <scope>NUCLEOTIDE SEQUENCE [LARGE SCALE MRNA] (ISOFORMS 1 AND 2)</scope>
    <source>
        <tissue>Kidney</tissue>
    </source>
</reference>
<reference key="3">
    <citation type="journal article" date="2006" name="Nature">
        <title>Human chromosome 11 DNA sequence and analysis including novel gene identification.</title>
        <authorList>
            <person name="Taylor T.D."/>
            <person name="Noguchi H."/>
            <person name="Totoki Y."/>
            <person name="Toyoda A."/>
            <person name="Kuroki Y."/>
            <person name="Dewar K."/>
            <person name="Lloyd C."/>
            <person name="Itoh T."/>
            <person name="Takeda T."/>
            <person name="Kim D.-W."/>
            <person name="She X."/>
            <person name="Barlow K.F."/>
            <person name="Bloom T."/>
            <person name="Bruford E."/>
            <person name="Chang J.L."/>
            <person name="Cuomo C.A."/>
            <person name="Eichler E."/>
            <person name="FitzGerald M.G."/>
            <person name="Jaffe D.B."/>
            <person name="LaButti K."/>
            <person name="Nicol R."/>
            <person name="Park H.-S."/>
            <person name="Seaman C."/>
            <person name="Sougnez C."/>
            <person name="Yang X."/>
            <person name="Zimmer A.R."/>
            <person name="Zody M.C."/>
            <person name="Birren B.W."/>
            <person name="Nusbaum C."/>
            <person name="Fujiyama A."/>
            <person name="Hattori M."/>
            <person name="Rogers J."/>
            <person name="Lander E.S."/>
            <person name="Sakaki Y."/>
        </authorList>
    </citation>
    <scope>NUCLEOTIDE SEQUENCE [LARGE SCALE GENOMIC DNA]</scope>
</reference>
<reference key="4">
    <citation type="journal article" date="2004" name="Genome Res.">
        <title>The status, quality, and expansion of the NIH full-length cDNA project: the Mammalian Gene Collection (MGC).</title>
        <authorList>
            <consortium name="The MGC Project Team"/>
        </authorList>
    </citation>
    <scope>NUCLEOTIDE SEQUENCE [LARGE SCALE MRNA] (ISOFORM 1)</scope>
    <source>
        <tissue>Lung</tissue>
    </source>
</reference>
<reference key="5">
    <citation type="submission" date="2003-07" db="EMBL/GenBank/DDBJ databases">
        <title>Cloning of a new human cDNA homology to human putative glycine-N-acyltransferase mRNA.</title>
        <authorList>
            <person name="Cui W.C."/>
            <person name="Yu L."/>
            <person name="Gong R.M."/>
            <person name="Chu J.H."/>
            <person name="Yu Y.F."/>
            <person name="Zhao S.Y."/>
        </authorList>
    </citation>
    <scope>NUCLEOTIDE SEQUENCE [MRNA] OF 1-159</scope>
</reference>
<reference key="6">
    <citation type="journal article" date="2012" name="Biochem. Biophys. Res. Commun.">
        <title>Designation of enzyme activity of glycine-N-acyltransferase family genes and depression of glycine-N-acyltransferase in human hepatocellular carcinoma.</title>
        <authorList>
            <person name="Matsuo M."/>
            <person name="Terai K."/>
            <person name="Kameda N."/>
            <person name="Matsumoto A."/>
            <person name="Kurokawa Y."/>
            <person name="Funase Y."/>
            <person name="Nishikawa K."/>
            <person name="Sugaya N."/>
            <person name="Hiruta N."/>
            <person name="Kishimoto T."/>
        </authorList>
    </citation>
    <scope>FUNCTION</scope>
    <scope>CATALYTIC ACTIVITY</scope>
</reference>
<reference key="7">
    <citation type="journal article" date="2014" name="J. Proteomics">
        <title>An enzyme assisted RP-RPLC approach for in-depth analysis of human liver phosphoproteome.</title>
        <authorList>
            <person name="Bian Y."/>
            <person name="Song C."/>
            <person name="Cheng K."/>
            <person name="Dong M."/>
            <person name="Wang F."/>
            <person name="Huang J."/>
            <person name="Sun D."/>
            <person name="Wang L."/>
            <person name="Ye M."/>
            <person name="Zou H."/>
        </authorList>
    </citation>
    <scope>IDENTIFICATION BY MASS SPECTROMETRY [LARGE SCALE ANALYSIS]</scope>
    <source>
        <tissue>Liver</tissue>
    </source>
</reference>
<dbReference type="EC" id="2.3.1.68" evidence="1"/>
<dbReference type="EMBL" id="DQ084381">
    <property type="protein sequence ID" value="AAZ31239.1"/>
    <property type="molecule type" value="mRNA"/>
</dbReference>
<dbReference type="EMBL" id="AK055818">
    <property type="protein sequence ID" value="BAB71023.1"/>
    <property type="molecule type" value="mRNA"/>
</dbReference>
<dbReference type="EMBL" id="AK091965">
    <property type="protein sequence ID" value="BAC03779.1"/>
    <property type="molecule type" value="mRNA"/>
</dbReference>
<dbReference type="EMBL" id="AP001652">
    <property type="status" value="NOT_ANNOTATED_CDS"/>
    <property type="molecule type" value="Genomic_DNA"/>
</dbReference>
<dbReference type="EMBL" id="BC008353">
    <property type="protein sequence ID" value="AAH08353.1"/>
    <property type="molecule type" value="mRNA"/>
</dbReference>
<dbReference type="EMBL" id="AF087878">
    <property type="protein sequence ID" value="AAP97178.1"/>
    <property type="molecule type" value="mRNA"/>
</dbReference>
<dbReference type="CCDS" id="CCDS31556.1">
    <molecule id="Q969I3-2"/>
</dbReference>
<dbReference type="CCDS" id="CCDS55768.1">
    <molecule id="Q969I3-1"/>
</dbReference>
<dbReference type="RefSeq" id="NP_001207423.1">
    <molecule id="Q969I3-1"/>
    <property type="nucleotide sequence ID" value="NM_001220494.4"/>
</dbReference>
<dbReference type="RefSeq" id="NP_001207425.1">
    <molecule id="Q969I3-1"/>
    <property type="nucleotide sequence ID" value="NM_001220496.4"/>
</dbReference>
<dbReference type="RefSeq" id="NP_001341628.1">
    <molecule id="Q969I3-1"/>
    <property type="nucleotide sequence ID" value="NM_001354699.4"/>
</dbReference>
<dbReference type="RefSeq" id="NP_001376640.1">
    <molecule id="Q969I3-1"/>
    <property type="nucleotide sequence ID" value="NM_001389711.2"/>
</dbReference>
<dbReference type="RefSeq" id="NP_001376641.1">
    <molecule id="Q969I3-1"/>
    <property type="nucleotide sequence ID" value="NM_001389712.2"/>
</dbReference>
<dbReference type="RefSeq" id="NP_001376642.1">
    <molecule id="Q969I3-1"/>
    <property type="nucleotide sequence ID" value="NM_001389713.2"/>
</dbReference>
<dbReference type="RefSeq" id="NP_001376643.1">
    <molecule id="Q969I3-1"/>
    <property type="nucleotide sequence ID" value="NM_001389714.2"/>
</dbReference>
<dbReference type="RefSeq" id="NP_001376644.1">
    <molecule id="Q969I3-1"/>
    <property type="nucleotide sequence ID" value="NM_001389715.2"/>
</dbReference>
<dbReference type="RefSeq" id="NP_001376645.1">
    <molecule id="Q969I3-1"/>
    <property type="nucleotide sequence ID" value="NM_001389716.2"/>
</dbReference>
<dbReference type="RefSeq" id="NP_001376646.1">
    <molecule id="Q969I3-1"/>
    <property type="nucleotide sequence ID" value="NM_001389717.2"/>
</dbReference>
<dbReference type="RefSeq" id="NP_542392.2">
    <molecule id="Q969I3-2"/>
    <property type="nucleotide sequence ID" value="NM_080661.4"/>
</dbReference>
<dbReference type="SMR" id="Q969I3"/>
<dbReference type="BioGRID" id="124929">
    <property type="interactions" value="7"/>
</dbReference>
<dbReference type="FunCoup" id="Q969I3">
    <property type="interactions" value="6"/>
</dbReference>
<dbReference type="IntAct" id="Q969I3">
    <property type="interactions" value="4"/>
</dbReference>
<dbReference type="STRING" id="9606.ENSP00000300079"/>
<dbReference type="DrugBank" id="DB00145">
    <property type="generic name" value="Glycine"/>
</dbReference>
<dbReference type="iPTMnet" id="Q969I3"/>
<dbReference type="PhosphoSitePlus" id="Q969I3"/>
<dbReference type="SwissPalm" id="Q969I3"/>
<dbReference type="BioMuta" id="GLYATL1"/>
<dbReference type="DMDM" id="74731045"/>
<dbReference type="jPOST" id="Q969I3"/>
<dbReference type="MassIVE" id="Q969I3"/>
<dbReference type="PaxDb" id="9606-ENSP00000300079"/>
<dbReference type="PeptideAtlas" id="Q969I3"/>
<dbReference type="ProteomicsDB" id="75769">
    <molecule id="Q969I3-1"/>
</dbReference>
<dbReference type="ProteomicsDB" id="75770">
    <molecule id="Q969I3-2"/>
</dbReference>
<dbReference type="Antibodypedia" id="27696">
    <property type="antibodies" value="77 antibodies from 23 providers"/>
</dbReference>
<dbReference type="DNASU" id="92292"/>
<dbReference type="Ensembl" id="ENST00000300079.9">
    <molecule id="Q969I3-2"/>
    <property type="protein sequence ID" value="ENSP00000300079.5"/>
    <property type="gene ID" value="ENSG00000166840.14"/>
</dbReference>
<dbReference type="Ensembl" id="ENST00000317391.8">
    <molecule id="Q969I3-1"/>
    <property type="protein sequence ID" value="ENSP00000322223.4"/>
    <property type="gene ID" value="ENSG00000166840.14"/>
</dbReference>
<dbReference type="Ensembl" id="ENST00000532726.6">
    <molecule id="Q969I3-1"/>
    <property type="protein sequence ID" value="ENSP00000436116.2"/>
    <property type="gene ID" value="ENSG00000166840.14"/>
</dbReference>
<dbReference type="Ensembl" id="ENST00000612196.1">
    <molecule id="Q969I3-1"/>
    <property type="protein sequence ID" value="ENSP00000479741.1"/>
    <property type="gene ID" value="ENSG00000166840.14"/>
</dbReference>
<dbReference type="GeneID" id="92292"/>
<dbReference type="KEGG" id="hsa:92292"/>
<dbReference type="MANE-Select" id="ENST00000532726.6">
    <property type="protein sequence ID" value="ENSP00000436116.2"/>
    <property type="RefSeq nucleotide sequence ID" value="NM_001389712.2"/>
    <property type="RefSeq protein sequence ID" value="NP_001376641.1"/>
</dbReference>
<dbReference type="UCSC" id="uc001nnf.4">
    <molecule id="Q969I3-1"/>
    <property type="organism name" value="human"/>
</dbReference>
<dbReference type="AGR" id="HGNC:30519"/>
<dbReference type="CTD" id="92292"/>
<dbReference type="DisGeNET" id="92292"/>
<dbReference type="GeneCards" id="GLYATL1"/>
<dbReference type="HGNC" id="HGNC:30519">
    <property type="gene designation" value="GLYATL1"/>
</dbReference>
<dbReference type="HPA" id="ENSG00000166840">
    <property type="expression patterns" value="Group enriched (kidney, liver)"/>
</dbReference>
<dbReference type="MIM" id="614761">
    <property type="type" value="gene"/>
</dbReference>
<dbReference type="neXtProt" id="NX_Q969I3"/>
<dbReference type="OpenTargets" id="ENSG00000166840"/>
<dbReference type="PharmGKB" id="PA142671727"/>
<dbReference type="VEuPathDB" id="HostDB:ENSG00000166840"/>
<dbReference type="eggNOG" id="ENOG502QVT5">
    <property type="taxonomic scope" value="Eukaryota"/>
</dbReference>
<dbReference type="GeneTree" id="ENSGT00950000183133"/>
<dbReference type="HOGENOM" id="CLU_060336_0_0_1"/>
<dbReference type="InParanoid" id="Q969I3"/>
<dbReference type="OMA" id="LPAYCML"/>
<dbReference type="OrthoDB" id="61870at2759"/>
<dbReference type="PAN-GO" id="Q969I3">
    <property type="GO annotations" value="2 GO annotations based on evolutionary models"/>
</dbReference>
<dbReference type="PhylomeDB" id="Q969I3"/>
<dbReference type="TreeFam" id="TF353258"/>
<dbReference type="BRENDA" id="2.3.1.13">
    <property type="organism ID" value="2681"/>
</dbReference>
<dbReference type="BRENDA" id="2.3.1.68">
    <property type="organism ID" value="2681"/>
</dbReference>
<dbReference type="PathwayCommons" id="Q969I3"/>
<dbReference type="Reactome" id="R-HSA-177128">
    <property type="pathway name" value="Conjugation of salicylate with glycine"/>
</dbReference>
<dbReference type="Reactome" id="R-HSA-177135">
    <property type="pathway name" value="Conjugation of benzoate with glycine"/>
</dbReference>
<dbReference type="Reactome" id="R-HSA-9749641">
    <property type="pathway name" value="Aspirin ADME"/>
</dbReference>
<dbReference type="BioGRID-ORCS" id="92292">
    <property type="hits" value="18 hits in 1145 CRISPR screens"/>
</dbReference>
<dbReference type="ChiTaRS" id="GLYATL1">
    <property type="organism name" value="human"/>
</dbReference>
<dbReference type="GenomeRNAi" id="92292"/>
<dbReference type="Pharos" id="Q969I3">
    <property type="development level" value="Tbio"/>
</dbReference>
<dbReference type="PRO" id="PR:Q969I3"/>
<dbReference type="Proteomes" id="UP000005640">
    <property type="component" value="Chromosome 11"/>
</dbReference>
<dbReference type="RNAct" id="Q969I3">
    <property type="molecule type" value="protein"/>
</dbReference>
<dbReference type="Bgee" id="ENSG00000166840">
    <property type="expression patterns" value="Expressed in kidney epithelium and 106 other cell types or tissues"/>
</dbReference>
<dbReference type="ExpressionAtlas" id="Q969I3">
    <property type="expression patterns" value="baseline and differential"/>
</dbReference>
<dbReference type="GO" id="GO:0005739">
    <property type="term" value="C:mitochondrion"/>
    <property type="evidence" value="ECO:0007669"/>
    <property type="project" value="InterPro"/>
</dbReference>
<dbReference type="GO" id="GO:0047946">
    <property type="term" value="F:glutamine N-acyltransferase activity"/>
    <property type="evidence" value="ECO:0000314"/>
    <property type="project" value="UniProtKB"/>
</dbReference>
<dbReference type="GO" id="GO:0047961">
    <property type="term" value="F:glycine N-acyltransferase activity"/>
    <property type="evidence" value="ECO:0007669"/>
    <property type="project" value="InterPro"/>
</dbReference>
<dbReference type="GO" id="GO:0006541">
    <property type="term" value="P:glutamine metabolic process"/>
    <property type="evidence" value="ECO:0000314"/>
    <property type="project" value="UniProtKB"/>
</dbReference>
<dbReference type="FunFam" id="3.40.630.30:FF:000090">
    <property type="entry name" value="Glycine N-acyltransferase-like protein 1"/>
    <property type="match status" value="1"/>
</dbReference>
<dbReference type="Gene3D" id="3.40.630.30">
    <property type="match status" value="1"/>
</dbReference>
<dbReference type="InterPro" id="IPR016181">
    <property type="entry name" value="Acyl_CoA_acyltransferase"/>
</dbReference>
<dbReference type="InterPro" id="IPR010313">
    <property type="entry name" value="Glycine_N-acyltransferase"/>
</dbReference>
<dbReference type="InterPro" id="IPR013652">
    <property type="entry name" value="Glycine_N-acyltransferase_C"/>
</dbReference>
<dbReference type="InterPro" id="IPR015938">
    <property type="entry name" value="Glycine_N-acyltransferase_N"/>
</dbReference>
<dbReference type="PANTHER" id="PTHR15298:SF7">
    <property type="entry name" value="GLYCINE N-ACYLTRANSFERASE-LIKE PROTEIN 1"/>
    <property type="match status" value="1"/>
</dbReference>
<dbReference type="PANTHER" id="PTHR15298">
    <property type="entry name" value="L-COA N-ACYLTRANSFERASE-RELATED"/>
    <property type="match status" value="1"/>
</dbReference>
<dbReference type="Pfam" id="PF08444">
    <property type="entry name" value="Gly_acyl_tr_C"/>
    <property type="match status" value="1"/>
</dbReference>
<dbReference type="Pfam" id="PF06021">
    <property type="entry name" value="Gly_acyl_tr_N"/>
    <property type="match status" value="1"/>
</dbReference>
<dbReference type="SUPFAM" id="SSF55729">
    <property type="entry name" value="Acyl-CoA N-acyltransferases (Nat)"/>
    <property type="match status" value="1"/>
</dbReference>
<keyword id="KW-0012">Acyltransferase</keyword>
<keyword id="KW-0025">Alternative splicing</keyword>
<keyword id="KW-1267">Proteomics identification</keyword>
<keyword id="KW-1185">Reference proteome</keyword>
<keyword id="KW-0808">Transferase</keyword>
<proteinExistence type="evidence at protein level"/>
<name>GLYL1_HUMAN</name>
<feature type="chain" id="PRO_0000281874" description="Glycine N-acyltransferase-like protein 1">
    <location>
        <begin position="1"/>
        <end position="302"/>
    </location>
</feature>
<feature type="splice variant" id="VSP_024076" description="In isoform 2." evidence="3">
    <original>MILLNNSHKLLALYKSLARSIPES</original>
    <variation>MFKLCSNKMVSQEGSEVELLVSPGARSEHGRYLQDPIVSIDLSEWLRIIEFLLQG</variation>
    <location>
        <begin position="1"/>
        <end position="24"/>
    </location>
</feature>
<organism>
    <name type="scientific">Homo sapiens</name>
    <name type="common">Human</name>
    <dbReference type="NCBI Taxonomy" id="9606"/>
    <lineage>
        <taxon>Eukaryota</taxon>
        <taxon>Metazoa</taxon>
        <taxon>Chordata</taxon>
        <taxon>Craniata</taxon>
        <taxon>Vertebrata</taxon>
        <taxon>Euteleostomi</taxon>
        <taxon>Mammalia</taxon>
        <taxon>Eutheria</taxon>
        <taxon>Euarchontoglires</taxon>
        <taxon>Primates</taxon>
        <taxon>Haplorrhini</taxon>
        <taxon>Catarrhini</taxon>
        <taxon>Hominidae</taxon>
        <taxon>Homo</taxon>
    </lineage>
</organism>
<accession>Q969I3</accession>
<accession>A6NDT0</accession>
<accession>Q7Z510</accession>
<accession>Q8NAW8</accession>
<evidence type="ECO:0000269" key="1">
    <source>
    </source>
</evidence>
<evidence type="ECO:0000269" key="2">
    <source ref="1"/>
</evidence>
<evidence type="ECO:0000303" key="3">
    <source>
    </source>
</evidence>
<evidence type="ECO:0000305" key="4"/>
<evidence type="ECO:0000312" key="5">
    <source>
        <dbReference type="HGNC" id="HGNC:30519"/>
    </source>
</evidence>
<sequence>MILLNNSHKLLALYKSLARSIPESLKVYGSVYHINHGNPFNMEVLVDSWPEYQMVIIRPQKQEMTDDMDSYTNVYRMFSKEPQKSEEVLKNCEIVNWKQRLQIQGLQESLGEGIRVATFSKSVKVEHSRALLLVTEDILKLNASSKSKLGSWAETGHPDDEFESETPNFKYAQLDVSYSGLVNDNWKRGKNERSLHYIKRCIEDLPAACMLGPEGVPVSWVTMDPSCEVGMAYSMEKYRRTGNMARVMVRYMKYLRQKNIPFYISVLEENEDSRRFVGQFGFFEASCEWHQWTCYPQNLVPF</sequence>
<protein>
    <recommendedName>
        <fullName evidence="4">Glycine N-acyltransferase-like protein 1</fullName>
        <ecNumber evidence="1">2.3.1.68</ecNumber>
    </recommendedName>
    <alternativeName>
        <fullName>Acyl-CoA:glycine N-acyltransferase-like protein 1</fullName>
    </alternativeName>
    <alternativeName>
        <fullName>Glutamine N-acyltransferase</fullName>
    </alternativeName>
</protein>